<dbReference type="EC" id="7.5.2.6" evidence="1"/>
<dbReference type="EMBL" id="CP000243">
    <property type="protein sequence ID" value="ABE06470.1"/>
    <property type="molecule type" value="Genomic_DNA"/>
</dbReference>
<dbReference type="RefSeq" id="WP_000551259.1">
    <property type="nucleotide sequence ID" value="NZ_CP064825.1"/>
</dbReference>
<dbReference type="SMR" id="Q1RDU4"/>
<dbReference type="KEGG" id="eci:UTI89_C0985"/>
<dbReference type="HOGENOM" id="CLU_000604_84_3_6"/>
<dbReference type="Proteomes" id="UP000001952">
    <property type="component" value="Chromosome"/>
</dbReference>
<dbReference type="GO" id="GO:0005886">
    <property type="term" value="C:plasma membrane"/>
    <property type="evidence" value="ECO:0007669"/>
    <property type="project" value="UniProtKB-SubCell"/>
</dbReference>
<dbReference type="GO" id="GO:0015421">
    <property type="term" value="F:ABC-type oligopeptide transporter activity"/>
    <property type="evidence" value="ECO:0007669"/>
    <property type="project" value="TreeGrafter"/>
</dbReference>
<dbReference type="GO" id="GO:0005524">
    <property type="term" value="F:ATP binding"/>
    <property type="evidence" value="ECO:0007669"/>
    <property type="project" value="UniProtKB-KW"/>
</dbReference>
<dbReference type="GO" id="GO:0016887">
    <property type="term" value="F:ATP hydrolysis activity"/>
    <property type="evidence" value="ECO:0007669"/>
    <property type="project" value="InterPro"/>
</dbReference>
<dbReference type="GO" id="GO:0034040">
    <property type="term" value="F:ATPase-coupled lipid transmembrane transporter activity"/>
    <property type="evidence" value="ECO:0007669"/>
    <property type="project" value="InterPro"/>
</dbReference>
<dbReference type="CDD" id="cd18552">
    <property type="entry name" value="ABC_6TM_MsbA_like"/>
    <property type="match status" value="1"/>
</dbReference>
<dbReference type="CDD" id="cd03251">
    <property type="entry name" value="ABCC_MsbA"/>
    <property type="match status" value="1"/>
</dbReference>
<dbReference type="FunFam" id="1.20.1560.10:FF:000008">
    <property type="entry name" value="Lipid A export ATP-binding/permease protein MsbA"/>
    <property type="match status" value="1"/>
</dbReference>
<dbReference type="FunFam" id="3.40.50.300:FF:000140">
    <property type="entry name" value="Lipid A export ATP-binding/permease protein MsbA"/>
    <property type="match status" value="1"/>
</dbReference>
<dbReference type="Gene3D" id="1.20.1560.10">
    <property type="entry name" value="ABC transporter type 1, transmembrane domain"/>
    <property type="match status" value="1"/>
</dbReference>
<dbReference type="Gene3D" id="3.40.50.300">
    <property type="entry name" value="P-loop containing nucleotide triphosphate hydrolases"/>
    <property type="match status" value="1"/>
</dbReference>
<dbReference type="InterPro" id="IPR003593">
    <property type="entry name" value="AAA+_ATPase"/>
</dbReference>
<dbReference type="InterPro" id="IPR011527">
    <property type="entry name" value="ABC1_TM_dom"/>
</dbReference>
<dbReference type="InterPro" id="IPR036640">
    <property type="entry name" value="ABC1_TM_sf"/>
</dbReference>
<dbReference type="InterPro" id="IPR003439">
    <property type="entry name" value="ABC_transporter-like_ATP-bd"/>
</dbReference>
<dbReference type="InterPro" id="IPR017871">
    <property type="entry name" value="ABC_transporter-like_CS"/>
</dbReference>
<dbReference type="InterPro" id="IPR011917">
    <property type="entry name" value="ABC_transpr_lipidA"/>
</dbReference>
<dbReference type="InterPro" id="IPR027417">
    <property type="entry name" value="P-loop_NTPase"/>
</dbReference>
<dbReference type="InterPro" id="IPR039421">
    <property type="entry name" value="Type_1_exporter"/>
</dbReference>
<dbReference type="NCBIfam" id="TIGR02203">
    <property type="entry name" value="MsbA_lipidA"/>
    <property type="match status" value="1"/>
</dbReference>
<dbReference type="NCBIfam" id="NF008381">
    <property type="entry name" value="PRK11176.1"/>
    <property type="match status" value="1"/>
</dbReference>
<dbReference type="PANTHER" id="PTHR43394:SF1">
    <property type="entry name" value="ATP-BINDING CASSETTE SUB-FAMILY B MEMBER 10, MITOCHONDRIAL"/>
    <property type="match status" value="1"/>
</dbReference>
<dbReference type="PANTHER" id="PTHR43394">
    <property type="entry name" value="ATP-DEPENDENT PERMEASE MDL1, MITOCHONDRIAL"/>
    <property type="match status" value="1"/>
</dbReference>
<dbReference type="Pfam" id="PF00664">
    <property type="entry name" value="ABC_membrane"/>
    <property type="match status" value="1"/>
</dbReference>
<dbReference type="Pfam" id="PF00005">
    <property type="entry name" value="ABC_tran"/>
    <property type="match status" value="1"/>
</dbReference>
<dbReference type="SMART" id="SM00382">
    <property type="entry name" value="AAA"/>
    <property type="match status" value="1"/>
</dbReference>
<dbReference type="SUPFAM" id="SSF90123">
    <property type="entry name" value="ABC transporter transmembrane region"/>
    <property type="match status" value="1"/>
</dbReference>
<dbReference type="SUPFAM" id="SSF52540">
    <property type="entry name" value="P-loop containing nucleoside triphosphate hydrolases"/>
    <property type="match status" value="1"/>
</dbReference>
<dbReference type="PROSITE" id="PS50929">
    <property type="entry name" value="ABC_TM1F"/>
    <property type="match status" value="1"/>
</dbReference>
<dbReference type="PROSITE" id="PS00211">
    <property type="entry name" value="ABC_TRANSPORTER_1"/>
    <property type="match status" value="1"/>
</dbReference>
<dbReference type="PROSITE" id="PS50893">
    <property type="entry name" value="ABC_TRANSPORTER_2"/>
    <property type="match status" value="1"/>
</dbReference>
<dbReference type="PROSITE" id="PS51239">
    <property type="entry name" value="MSBA"/>
    <property type="match status" value="1"/>
</dbReference>
<keyword id="KW-0067">ATP-binding</keyword>
<keyword id="KW-0997">Cell inner membrane</keyword>
<keyword id="KW-1003">Cell membrane</keyword>
<keyword id="KW-0445">Lipid transport</keyword>
<keyword id="KW-0472">Membrane</keyword>
<keyword id="KW-0547">Nucleotide-binding</keyword>
<keyword id="KW-1278">Translocase</keyword>
<keyword id="KW-0812">Transmembrane</keyword>
<keyword id="KW-1133">Transmembrane helix</keyword>
<keyword id="KW-0813">Transport</keyword>
<protein>
    <recommendedName>
        <fullName evidence="1">ATP-dependent lipid A-core flippase</fullName>
        <ecNumber evidence="1">7.5.2.6</ecNumber>
    </recommendedName>
    <alternativeName>
        <fullName evidence="1">Lipid A export ATP-binding/permease protein MsbA</fullName>
    </alternativeName>
</protein>
<evidence type="ECO:0000255" key="1">
    <source>
        <dbReference type="HAMAP-Rule" id="MF_01703"/>
    </source>
</evidence>
<name>MSBA_ECOUT</name>
<feature type="chain" id="PRO_0000271623" description="ATP-dependent lipid A-core flippase">
    <location>
        <begin position="1"/>
        <end position="582"/>
    </location>
</feature>
<feature type="transmembrane region" description="Helical" evidence="1">
    <location>
        <begin position="16"/>
        <end position="36"/>
    </location>
</feature>
<feature type="transmembrane region" description="Helical" evidence="1">
    <location>
        <begin position="64"/>
        <end position="84"/>
    </location>
</feature>
<feature type="transmembrane region" description="Helical" evidence="1">
    <location>
        <begin position="153"/>
        <end position="173"/>
    </location>
</feature>
<feature type="transmembrane region" description="Helical" evidence="1">
    <location>
        <begin position="253"/>
        <end position="273"/>
    </location>
</feature>
<feature type="transmembrane region" description="Helical" evidence="1">
    <location>
        <begin position="275"/>
        <end position="295"/>
    </location>
</feature>
<feature type="domain" description="ABC transmembrane type-1" evidence="1">
    <location>
        <begin position="28"/>
        <end position="310"/>
    </location>
</feature>
<feature type="domain" description="ABC transporter" evidence="1">
    <location>
        <begin position="342"/>
        <end position="578"/>
    </location>
</feature>
<feature type="binding site" evidence="1">
    <location>
        <begin position="376"/>
        <end position="383"/>
    </location>
    <ligand>
        <name>ATP</name>
        <dbReference type="ChEBI" id="CHEBI:30616"/>
    </ligand>
</feature>
<sequence length="582" mass="64507">MHNDKDLSTWQTFRRLWPTIAPFKAGLIVAGVALILNAASDTFMLSLLKPLLDDGFGKTDRSVLMWMPLVVIGLMILRGITSYISSYCISWVSGKVVMTMRRRLFGHMMGMPVSFFDKQSTGTLLSRITYDSEQVASSSSGALITVVREGASIIGLFIMMFYYSWQLSIILIVLAPIVSIAIRVVSKRFRNISKNMQNTMGQVTTSAEQMLKGHKEVLIFGGQEVETKRFDKVSNRMRLQGMKMVSASSISDPIIQLIASLALAFVLYAASFPSVMDSLTAGTITVVFSSMIALMRPLKSLTNVNAQFQRGMAACQTLFTILDSEQEKDEGKRVIERATGDVEFRNVTFTYPGRDVPALRNINLKIPAGKTVALVGRSGSGKSTIASLITRFYDIDEGEILMDGHDLREYTLASLRNQVALVSQNVHLFNDTVANNIAYARTEQYSREQIEEAARMAYAMDFINKMDNGLDTVIGENGVLLSGGQRQRIAIARALLRDSPILILDEATSALDTESERAIQAALDELQKNRTSLVIAHRLSTIEKADEIVVVEDGVIVERGTHNDLLEHRGVYAQLHKMQFGQ</sequence>
<proteinExistence type="inferred from homology"/>
<gene>
    <name evidence="1" type="primary">msbA</name>
    <name type="ordered locus">UTI89_C0985</name>
</gene>
<comment type="function">
    <text evidence="1">Involved in lipopolysaccharide (LPS) biosynthesis. Translocates lipid A-core from the inner to the outer leaflet of the inner membrane. Transmembrane domains (TMD) form a pore in the inner membrane and the ATP-binding domain (NBD) is responsible for energy generation.</text>
</comment>
<comment type="catalytic activity">
    <reaction evidence="1">
        <text>ATP + H2O + lipid A-core oligosaccharideSide 1 = ADP + phosphate + lipid A-core oligosaccharideSide 2.</text>
        <dbReference type="EC" id="7.5.2.6"/>
    </reaction>
</comment>
<comment type="subunit">
    <text evidence="1">Homodimer.</text>
</comment>
<comment type="subcellular location">
    <subcellularLocation>
        <location evidence="1">Cell inner membrane</location>
        <topology evidence="1">Multi-pass membrane protein</topology>
    </subcellularLocation>
</comment>
<comment type="domain">
    <text evidence="1">In MsbA the ATP-binding domain (NBD) and the transmembrane domain (TMD) are fused.</text>
</comment>
<comment type="similarity">
    <text evidence="1">Belongs to the ABC transporter superfamily. Lipid exporter (TC 3.A.1.106) family.</text>
</comment>
<organism>
    <name type="scientific">Escherichia coli (strain UTI89 / UPEC)</name>
    <dbReference type="NCBI Taxonomy" id="364106"/>
    <lineage>
        <taxon>Bacteria</taxon>
        <taxon>Pseudomonadati</taxon>
        <taxon>Pseudomonadota</taxon>
        <taxon>Gammaproteobacteria</taxon>
        <taxon>Enterobacterales</taxon>
        <taxon>Enterobacteriaceae</taxon>
        <taxon>Escherichia</taxon>
    </lineage>
</organism>
<accession>Q1RDU4</accession>
<reference key="1">
    <citation type="journal article" date="2006" name="Proc. Natl. Acad. Sci. U.S.A.">
        <title>Identification of genes subject to positive selection in uropathogenic strains of Escherichia coli: a comparative genomics approach.</title>
        <authorList>
            <person name="Chen S.L."/>
            <person name="Hung C.-S."/>
            <person name="Xu J."/>
            <person name="Reigstad C.S."/>
            <person name="Magrini V."/>
            <person name="Sabo A."/>
            <person name="Blasiar D."/>
            <person name="Bieri T."/>
            <person name="Meyer R.R."/>
            <person name="Ozersky P."/>
            <person name="Armstrong J.R."/>
            <person name="Fulton R.S."/>
            <person name="Latreille J.P."/>
            <person name="Spieth J."/>
            <person name="Hooton T.M."/>
            <person name="Mardis E.R."/>
            <person name="Hultgren S.J."/>
            <person name="Gordon J.I."/>
        </authorList>
    </citation>
    <scope>NUCLEOTIDE SEQUENCE [LARGE SCALE GENOMIC DNA]</scope>
    <source>
        <strain>UTI89 / UPEC</strain>
    </source>
</reference>